<comment type="catalytic activity">
    <reaction evidence="1">
        <text>tRNA(Arg) + L-arginine + ATP = L-arginyl-tRNA(Arg) + AMP + diphosphate</text>
        <dbReference type="Rhea" id="RHEA:20301"/>
        <dbReference type="Rhea" id="RHEA-COMP:9658"/>
        <dbReference type="Rhea" id="RHEA-COMP:9673"/>
        <dbReference type="ChEBI" id="CHEBI:30616"/>
        <dbReference type="ChEBI" id="CHEBI:32682"/>
        <dbReference type="ChEBI" id="CHEBI:33019"/>
        <dbReference type="ChEBI" id="CHEBI:78442"/>
        <dbReference type="ChEBI" id="CHEBI:78513"/>
        <dbReference type="ChEBI" id="CHEBI:456215"/>
        <dbReference type="EC" id="6.1.1.19"/>
    </reaction>
</comment>
<comment type="subunit">
    <text evidence="1">Monomer.</text>
</comment>
<comment type="subcellular location">
    <subcellularLocation>
        <location evidence="1">Cytoplasm</location>
    </subcellularLocation>
</comment>
<comment type="similarity">
    <text evidence="1">Belongs to the class-I aminoacyl-tRNA synthetase family.</text>
</comment>
<accession>Q3Z2Q4</accession>
<dbReference type="EC" id="6.1.1.19" evidence="1"/>
<dbReference type="EMBL" id="CP000038">
    <property type="protein sequence ID" value="AAZ87958.1"/>
    <property type="molecule type" value="Genomic_DNA"/>
</dbReference>
<dbReference type="RefSeq" id="WP_001025298.1">
    <property type="nucleotide sequence ID" value="NC_007384.1"/>
</dbReference>
<dbReference type="SMR" id="Q3Z2Q4"/>
<dbReference type="GeneID" id="93776177"/>
<dbReference type="KEGG" id="ssn:SSON_1242"/>
<dbReference type="HOGENOM" id="CLU_006406_5_1_6"/>
<dbReference type="Proteomes" id="UP000002529">
    <property type="component" value="Chromosome"/>
</dbReference>
<dbReference type="GO" id="GO:0005737">
    <property type="term" value="C:cytoplasm"/>
    <property type="evidence" value="ECO:0007669"/>
    <property type="project" value="UniProtKB-SubCell"/>
</dbReference>
<dbReference type="GO" id="GO:0004814">
    <property type="term" value="F:arginine-tRNA ligase activity"/>
    <property type="evidence" value="ECO:0007669"/>
    <property type="project" value="UniProtKB-UniRule"/>
</dbReference>
<dbReference type="GO" id="GO:0005524">
    <property type="term" value="F:ATP binding"/>
    <property type="evidence" value="ECO:0007669"/>
    <property type="project" value="UniProtKB-UniRule"/>
</dbReference>
<dbReference type="GO" id="GO:0006420">
    <property type="term" value="P:arginyl-tRNA aminoacylation"/>
    <property type="evidence" value="ECO:0007669"/>
    <property type="project" value="UniProtKB-UniRule"/>
</dbReference>
<dbReference type="CDD" id="cd07956">
    <property type="entry name" value="Anticodon_Ia_Arg"/>
    <property type="match status" value="1"/>
</dbReference>
<dbReference type="CDD" id="cd00671">
    <property type="entry name" value="ArgRS_core"/>
    <property type="match status" value="1"/>
</dbReference>
<dbReference type="FunFam" id="1.10.730.10:FF:000001">
    <property type="entry name" value="Arginine--tRNA ligase"/>
    <property type="match status" value="1"/>
</dbReference>
<dbReference type="FunFam" id="3.30.1360.70:FF:000001">
    <property type="entry name" value="Arginine--tRNA ligase"/>
    <property type="match status" value="1"/>
</dbReference>
<dbReference type="FunFam" id="3.40.50.620:FF:000030">
    <property type="entry name" value="Arginine--tRNA ligase"/>
    <property type="match status" value="1"/>
</dbReference>
<dbReference type="Gene3D" id="3.30.1360.70">
    <property type="entry name" value="Arginyl tRNA synthetase N-terminal domain"/>
    <property type="match status" value="1"/>
</dbReference>
<dbReference type="Gene3D" id="3.40.50.620">
    <property type="entry name" value="HUPs"/>
    <property type="match status" value="1"/>
</dbReference>
<dbReference type="Gene3D" id="1.10.730.10">
    <property type="entry name" value="Isoleucyl-tRNA Synthetase, Domain 1"/>
    <property type="match status" value="1"/>
</dbReference>
<dbReference type="HAMAP" id="MF_00123">
    <property type="entry name" value="Arg_tRNA_synth"/>
    <property type="match status" value="1"/>
</dbReference>
<dbReference type="InterPro" id="IPR001412">
    <property type="entry name" value="aa-tRNA-synth_I_CS"/>
</dbReference>
<dbReference type="InterPro" id="IPR001278">
    <property type="entry name" value="Arg-tRNA-ligase"/>
</dbReference>
<dbReference type="InterPro" id="IPR005148">
    <property type="entry name" value="Arg-tRNA-synth_N"/>
</dbReference>
<dbReference type="InterPro" id="IPR036695">
    <property type="entry name" value="Arg-tRNA-synth_N_sf"/>
</dbReference>
<dbReference type="InterPro" id="IPR035684">
    <property type="entry name" value="ArgRS_core"/>
</dbReference>
<dbReference type="InterPro" id="IPR008909">
    <property type="entry name" value="DALR_anticod-bd"/>
</dbReference>
<dbReference type="InterPro" id="IPR014729">
    <property type="entry name" value="Rossmann-like_a/b/a_fold"/>
</dbReference>
<dbReference type="InterPro" id="IPR009080">
    <property type="entry name" value="tRNAsynth_Ia_anticodon-bd"/>
</dbReference>
<dbReference type="NCBIfam" id="TIGR00456">
    <property type="entry name" value="argS"/>
    <property type="match status" value="1"/>
</dbReference>
<dbReference type="PANTHER" id="PTHR11956:SF5">
    <property type="entry name" value="ARGININE--TRNA LIGASE, CYTOPLASMIC"/>
    <property type="match status" value="1"/>
</dbReference>
<dbReference type="PANTHER" id="PTHR11956">
    <property type="entry name" value="ARGINYL-TRNA SYNTHETASE"/>
    <property type="match status" value="1"/>
</dbReference>
<dbReference type="Pfam" id="PF03485">
    <property type="entry name" value="Arg_tRNA_synt_N"/>
    <property type="match status" value="1"/>
</dbReference>
<dbReference type="Pfam" id="PF05746">
    <property type="entry name" value="DALR_1"/>
    <property type="match status" value="1"/>
</dbReference>
<dbReference type="Pfam" id="PF00750">
    <property type="entry name" value="tRNA-synt_1d"/>
    <property type="match status" value="1"/>
</dbReference>
<dbReference type="PRINTS" id="PR01038">
    <property type="entry name" value="TRNASYNTHARG"/>
</dbReference>
<dbReference type="SMART" id="SM01016">
    <property type="entry name" value="Arg_tRNA_synt_N"/>
    <property type="match status" value="1"/>
</dbReference>
<dbReference type="SMART" id="SM00836">
    <property type="entry name" value="DALR_1"/>
    <property type="match status" value="1"/>
</dbReference>
<dbReference type="SUPFAM" id="SSF47323">
    <property type="entry name" value="Anticodon-binding domain of a subclass of class I aminoacyl-tRNA synthetases"/>
    <property type="match status" value="1"/>
</dbReference>
<dbReference type="SUPFAM" id="SSF55190">
    <property type="entry name" value="Arginyl-tRNA synthetase (ArgRS), N-terminal 'additional' domain"/>
    <property type="match status" value="1"/>
</dbReference>
<dbReference type="SUPFAM" id="SSF52374">
    <property type="entry name" value="Nucleotidylyl transferase"/>
    <property type="match status" value="1"/>
</dbReference>
<dbReference type="PROSITE" id="PS00178">
    <property type="entry name" value="AA_TRNA_LIGASE_I"/>
    <property type="match status" value="1"/>
</dbReference>
<evidence type="ECO:0000255" key="1">
    <source>
        <dbReference type="HAMAP-Rule" id="MF_00123"/>
    </source>
</evidence>
<proteinExistence type="inferred from homology"/>
<sequence>MNIQALLSEKVRQAMIAAGAPADCEPQVRHSAKVQFGDYQANGMMAVAKKLGMTPRQLAEQVLTHLDLNGIASKVEIAGPGFINIFLDPAFLAEHVQQALASDRLGVSTPEKQTIVVDYSAPNVAKEMHVGHLRSTIIGDAAVRTLEFLGHKVIRANHVGDWGTQFGMLIAWLEKQQQENAGDEMELADLEGFYRDAKKHYDEDEEFAERARNYVVKLQSGDEYFREMWRKLVDITMTQNQITYDRLNVTLTRDDVMGESLYNPMLPGIVADLKAKGLAVESEGATVVFLDEFKNKEGEPMGVIIQKKDGGYLYTTTDIACAKYRYETLHADRVLYYIDSRQHQHLMQAWAIVRKAGYVPESVPLEHHMFGMMLGKDGKPFKTRAGGTVKLADLLDEALERARRLVAEKNPDMPADELEKLANAVGIGAVKYADLSKNRTTDYIFDWDNMLAFEGNTAPYMQYAYTRVLSVFRKAEINEEQLAAAPVIIREDREAQLAARLLQFEETLTVVAREGTPHVMCAYLYDLAGLFSGFYEHCPILSAENEEVRNSRLKLAQLTAKTLKLGLDTLGIETVERM</sequence>
<keyword id="KW-0030">Aminoacyl-tRNA synthetase</keyword>
<keyword id="KW-0067">ATP-binding</keyword>
<keyword id="KW-0963">Cytoplasm</keyword>
<keyword id="KW-0436">Ligase</keyword>
<keyword id="KW-0547">Nucleotide-binding</keyword>
<keyword id="KW-0648">Protein biosynthesis</keyword>
<keyword id="KW-1185">Reference proteome</keyword>
<gene>
    <name evidence="1" type="primary">argS</name>
    <name type="ordered locus">SSON_1242</name>
</gene>
<feature type="chain" id="PRO_0000242092" description="Arginine--tRNA ligase">
    <location>
        <begin position="1"/>
        <end position="578"/>
    </location>
</feature>
<feature type="short sequence motif" description="'HIGH' region">
    <location>
        <begin position="122"/>
        <end position="132"/>
    </location>
</feature>
<name>SYR_SHISS</name>
<organism>
    <name type="scientific">Shigella sonnei (strain Ss046)</name>
    <dbReference type="NCBI Taxonomy" id="300269"/>
    <lineage>
        <taxon>Bacteria</taxon>
        <taxon>Pseudomonadati</taxon>
        <taxon>Pseudomonadota</taxon>
        <taxon>Gammaproteobacteria</taxon>
        <taxon>Enterobacterales</taxon>
        <taxon>Enterobacteriaceae</taxon>
        <taxon>Shigella</taxon>
    </lineage>
</organism>
<protein>
    <recommendedName>
        <fullName evidence="1">Arginine--tRNA ligase</fullName>
        <ecNumber evidence="1">6.1.1.19</ecNumber>
    </recommendedName>
    <alternativeName>
        <fullName evidence="1">Arginyl-tRNA synthetase</fullName>
        <shortName evidence="1">ArgRS</shortName>
    </alternativeName>
</protein>
<reference key="1">
    <citation type="journal article" date="2005" name="Nucleic Acids Res.">
        <title>Genome dynamics and diversity of Shigella species, the etiologic agents of bacillary dysentery.</title>
        <authorList>
            <person name="Yang F."/>
            <person name="Yang J."/>
            <person name="Zhang X."/>
            <person name="Chen L."/>
            <person name="Jiang Y."/>
            <person name="Yan Y."/>
            <person name="Tang X."/>
            <person name="Wang J."/>
            <person name="Xiong Z."/>
            <person name="Dong J."/>
            <person name="Xue Y."/>
            <person name="Zhu Y."/>
            <person name="Xu X."/>
            <person name="Sun L."/>
            <person name="Chen S."/>
            <person name="Nie H."/>
            <person name="Peng J."/>
            <person name="Xu J."/>
            <person name="Wang Y."/>
            <person name="Yuan Z."/>
            <person name="Wen Y."/>
            <person name="Yao Z."/>
            <person name="Shen Y."/>
            <person name="Qiang B."/>
            <person name="Hou Y."/>
            <person name="Yu J."/>
            <person name="Jin Q."/>
        </authorList>
    </citation>
    <scope>NUCLEOTIDE SEQUENCE [LARGE SCALE GENOMIC DNA]</scope>
    <source>
        <strain>Ss046</strain>
    </source>
</reference>